<accession>A4PBP6</accession>
<feature type="chain" id="PRO_0000402402" description="RNA-directed RNA polymerase P1">
    <location>
        <begin position="1"/>
        <end position="1458"/>
    </location>
</feature>
<feature type="domain" description="RdRp catalytic" evidence="2">
    <location>
        <begin position="686"/>
        <end position="894"/>
    </location>
</feature>
<feature type="region of interest" description="Disordered" evidence="3">
    <location>
        <begin position="148"/>
        <end position="168"/>
    </location>
</feature>
<feature type="region of interest" description="Disordered" evidence="3">
    <location>
        <begin position="971"/>
        <end position="993"/>
    </location>
</feature>
<feature type="compositionally biased region" description="Basic residues" evidence="3">
    <location>
        <begin position="979"/>
        <end position="989"/>
    </location>
</feature>
<dbReference type="EC" id="2.7.7.48"/>
<dbReference type="EMBL" id="AB254451">
    <property type="protein sequence ID" value="BAF49639.1"/>
    <property type="molecule type" value="Genomic_RNA"/>
</dbReference>
<dbReference type="RefSeq" id="YP_001111373.1">
    <property type="nucleotide sequence ID" value="NC_009248.1"/>
</dbReference>
<dbReference type="GeneID" id="4955111"/>
<dbReference type="KEGG" id="vg:4955111"/>
<dbReference type="Proteomes" id="UP000006720">
    <property type="component" value="Genome"/>
</dbReference>
<dbReference type="GO" id="GO:0030430">
    <property type="term" value="C:host cell cytoplasm"/>
    <property type="evidence" value="ECO:0007669"/>
    <property type="project" value="UniProtKB-SubCell"/>
</dbReference>
<dbReference type="GO" id="GO:0044423">
    <property type="term" value="C:virion component"/>
    <property type="evidence" value="ECO:0007669"/>
    <property type="project" value="UniProtKB-KW"/>
</dbReference>
<dbReference type="GO" id="GO:0000166">
    <property type="term" value="F:nucleotide binding"/>
    <property type="evidence" value="ECO:0007669"/>
    <property type="project" value="UniProtKB-KW"/>
</dbReference>
<dbReference type="GO" id="GO:0003723">
    <property type="term" value="F:RNA binding"/>
    <property type="evidence" value="ECO:0007669"/>
    <property type="project" value="InterPro"/>
</dbReference>
<dbReference type="GO" id="GO:0003968">
    <property type="term" value="F:RNA-directed RNA polymerase activity"/>
    <property type="evidence" value="ECO:0007669"/>
    <property type="project" value="UniProtKB-KW"/>
</dbReference>
<dbReference type="GO" id="GO:0019079">
    <property type="term" value="P:viral genome replication"/>
    <property type="evidence" value="ECO:0007669"/>
    <property type="project" value="InterPro"/>
</dbReference>
<dbReference type="InterPro" id="IPR043502">
    <property type="entry name" value="DNA/RNA_pol_sf"/>
</dbReference>
<dbReference type="InterPro" id="IPR007097">
    <property type="entry name" value="RNA-dir_pol_reovirus"/>
</dbReference>
<dbReference type="SUPFAM" id="SSF56672">
    <property type="entry name" value="DNA/RNA polymerases"/>
    <property type="match status" value="1"/>
</dbReference>
<dbReference type="PROSITE" id="PS50523">
    <property type="entry name" value="RDRP_DSRNA_REO"/>
    <property type="match status" value="1"/>
</dbReference>
<organismHost>
    <name type="scientific">Nephotettix cincticeps</name>
    <name type="common">Green rice leafhopper</name>
    <name type="synonym">Selenocephalus cincticeps</name>
    <dbReference type="NCBI Taxonomy" id="94400"/>
</organismHost>
<organismHost>
    <name type="scientific">Oryza sativa</name>
    <name type="common">Rice</name>
    <dbReference type="NCBI Taxonomy" id="4530"/>
</organismHost>
<organism>
    <name type="scientific">Rice gall dwarf virus</name>
    <name type="common">RGDV</name>
    <dbReference type="NCBI Taxonomy" id="10986"/>
    <lineage>
        <taxon>Viruses</taxon>
        <taxon>Riboviria</taxon>
        <taxon>Orthornavirae</taxon>
        <taxon>Duplornaviricota</taxon>
        <taxon>Resentoviricetes</taxon>
        <taxon>Reovirales</taxon>
        <taxon>Sedoreoviridae</taxon>
        <taxon>Phytoreovirus</taxon>
    </lineage>
</organism>
<keyword id="KW-1035">Host cytoplasm</keyword>
<keyword id="KW-0547">Nucleotide-binding</keyword>
<keyword id="KW-0548">Nucleotidyltransferase</keyword>
<keyword id="KW-1185">Reference proteome</keyword>
<keyword id="KW-0696">RNA-directed RNA polymerase</keyword>
<keyword id="KW-0808">Transferase</keyword>
<keyword id="KW-0693">Viral RNA replication</keyword>
<keyword id="KW-0946">Virion</keyword>
<proteinExistence type="inferred from homology"/>
<comment type="function">
    <text evidence="2">RNA-directed RNA polymerase that is involved in both transcription and genome replication. Together with the capping enzyme P5 and protein P7, forms an enzyme complex positioned near the channels situated at each of the five-fold vertices of the core (By similarity).</text>
</comment>
<comment type="catalytic activity">
    <reaction evidence="2">
        <text>RNA(n) + a ribonucleoside 5'-triphosphate = RNA(n+1) + diphosphate</text>
        <dbReference type="Rhea" id="RHEA:21248"/>
        <dbReference type="Rhea" id="RHEA-COMP:14527"/>
        <dbReference type="Rhea" id="RHEA-COMP:17342"/>
        <dbReference type="ChEBI" id="CHEBI:33019"/>
        <dbReference type="ChEBI" id="CHEBI:61557"/>
        <dbReference type="ChEBI" id="CHEBI:140395"/>
        <dbReference type="EC" id="2.7.7.48"/>
    </reaction>
</comment>
<comment type="subcellular location">
    <subcellularLocation>
        <location evidence="1">Virion</location>
    </subcellularLocation>
    <subcellularLocation>
        <location evidence="1">Host cytoplasm</location>
    </subcellularLocation>
    <text evidence="1">Located inside the inner capsid. Found in the interior of spherical cytoplasmic structures, called virus factories, that appear early after infection and are the site of viral replication and packaging.</text>
</comment>
<comment type="similarity">
    <text evidence="4">Belongs to the reoviridae RNA-directed RNA polymerase family.</text>
</comment>
<reference key="1">
    <citation type="journal article" date="2007" name="Arch. Virol.">
        <title>Molecular analysis of the genome segments S1, S4, S6, S7 and S12 of a Rice gall dwarf virus isolate from Thailand; completion of the genomic sequence.</title>
        <authorList>
            <person name="Moriyasu Y."/>
            <person name="Maruyama-Funatsuki W."/>
            <person name="Kikuchi A."/>
            <person name="Ichimi K."/>
            <person name="Zhong B."/>
            <person name="Yan J."/>
            <person name="Zhu Y."/>
            <person name="Suga H."/>
            <person name="Watanabe Y."/>
            <person name="Ichiki-Uehara T."/>
            <person name="Shimizu T."/>
            <person name="Hagiwara K."/>
            <person name="Kamiunten H."/>
            <person name="Akutsu K."/>
            <person name="Omura T."/>
        </authorList>
    </citation>
    <scope>NUCLEOTIDE SEQUENCE [GENOMIC RNA]</scope>
</reference>
<name>RDRP_RGDV</name>
<protein>
    <recommendedName>
        <fullName>RNA-directed RNA polymerase P1</fullName>
        <ecNumber>2.7.7.48</ecNumber>
    </recommendedName>
    <alternativeName>
        <fullName>Replicase</fullName>
    </alternativeName>
</protein>
<sequence>MSGADVESYIFPRIREILTGGISGIREAYINELRVCEKLIQWRNGSDNQVDSTNDASVKGMVFHRVSERNELQNRYAGLYDDLFKLNNNNVDIDVITKHDETIDKIISKELKSKMWYELNDEDIHSSLLPEFQIQTLDDYYDNMKKYLSQDDRDEKGNDNREEEDVKNRNDNVTRIQWQTLMEKDRKVKLHDDLSFSNEVETSLSTYINLRTKEEMDPRYVYHPVPALFITLTLLKVLTGGKAFSYGVRYLEKLCKTISKGERSLATYPAIFGSNGELVATRLYSHYAIKMRLILNNMTYLLTYKSCHEFKDFYIDVNDEVLLYMLENPNGGRDLKKAVTRLNLYYGLRYNPKTTDSLKIIDGVDYHHEHPKYSDRSYDAPIIEPENHFSASEQCYEHNAKLLNQAVYSKTVKEYIDSDIKKVKDLNLPLLTKFTEKLVDMRCNKSIIYDIVFMRTLLNMGGYSRSNQITDFKGTIDDITKMNDEYLSDVSEGGKRAKMSEWMYPKMEACGYGLTKSILNGQMVGVSYPSASESKAHIESYITPNSAGIGNLRFDVDVGGKMYKVRTTSKSAFVNALGTNIFNIDTISMEPMFLSEYLTHLNQDEKMLLYDRRKNRQIQDIELMRLCGQNVIGSRSTTAWRPVRPIYINVIQAHLAQAFIIGPHINATVGRQRTPPKGLWFTGEDVGIGFATIYQNGTSDVISHAIEASASGRCLSVLADCSSWDQTFLTESIIPYYQGIKRAISEFGQADSENYYMYDNQRKDVVGMRLTETIDWFNEYQKKRIFNASYLGERYSFKVQYMWSGRLDTFFMNSVQNALITERIANQVSSSVAGSPSLVWFQVAGDDAIMVYNANSITSSDQVDAIRKTVVDEYTADNHIINPQKTVISHISGEYAKIYYYAGMHFRDPSIQLHESEKISKATNITEVMRGYAQVAFEYNKRAIGSLRINSLYARLLASLAYSINVKRSDDESIENKPNRRGSKAKARSTKTNNLRSFSSVKYYPPLTSVITPTGVKGGLGMSLSGISLNEILMIKELLLDLVEAGLKIVDQVSFEQNEIVSKSLMRHFLRDRKDLIKEMGLDKGTKPVMAVRYRSSDSAFSSGNFENGISMRLESLDSHKLSIARQSEAKLKSVGVNLPKMYTYENLPYSTINQSLKGITIDKDLSRMTNSDLVDQLRSIPESECKGNLISKYPVYGLFNARRIISMDEKVDNPIRYISTPDEGKALERLIGSRTGIQFKNQGYGGSPAIVRFIRRNGLTITEENLIDLVISSGAISLANPKQNMIELFQAISGDQQSSLELANFFMNEKPHWEDKAISITINGSILENCDSRISNISRFVSIDAIRIPGDIKKMFTYIAYVYMCQMFILDENTPSKIHISINEEQLRDFLISAKPISKNRMKQTIDMKFSNQNSGVTIEIDEESLSRTADLDYEVLKLVHPLSVPFLRNLSEGSPM</sequence>
<evidence type="ECO:0000250" key="1"/>
<evidence type="ECO:0000255" key="2">
    <source>
        <dbReference type="PROSITE-ProRule" id="PRU00539"/>
    </source>
</evidence>
<evidence type="ECO:0000256" key="3">
    <source>
        <dbReference type="SAM" id="MobiDB-lite"/>
    </source>
</evidence>
<evidence type="ECO:0000305" key="4"/>